<feature type="chain" id="PRO_0000261794" description="Large ribosomal subunit protein uL13">
    <location>
        <begin position="1"/>
        <end position="142"/>
    </location>
</feature>
<organism>
    <name type="scientific">Shewanella frigidimarina (strain NCIMB 400)</name>
    <dbReference type="NCBI Taxonomy" id="318167"/>
    <lineage>
        <taxon>Bacteria</taxon>
        <taxon>Pseudomonadati</taxon>
        <taxon>Pseudomonadota</taxon>
        <taxon>Gammaproteobacteria</taxon>
        <taxon>Alteromonadales</taxon>
        <taxon>Shewanellaceae</taxon>
        <taxon>Shewanella</taxon>
    </lineage>
</organism>
<comment type="function">
    <text evidence="1">This protein is one of the early assembly proteins of the 50S ribosomal subunit, although it is not seen to bind rRNA by itself. It is important during the early stages of 50S assembly.</text>
</comment>
<comment type="subunit">
    <text evidence="1">Part of the 50S ribosomal subunit.</text>
</comment>
<comment type="similarity">
    <text evidence="1">Belongs to the universal ribosomal protein uL13 family.</text>
</comment>
<sequence length="142" mass="15746">MKTFTATPETVTRDWFVVDAEGKTLGRIATEIATRLRGKHKPEYTPHVDTGDYIIVINAEKVTVTGNKAAGKIYYSHSGFIGGIKQISFEKLQAHKPEMIIEKAVKGMLPKGPLGRAMFRKLKVYAGTEHNHAAQQPQVLDI</sequence>
<keyword id="KW-1185">Reference proteome</keyword>
<keyword id="KW-0687">Ribonucleoprotein</keyword>
<keyword id="KW-0689">Ribosomal protein</keyword>
<reference key="1">
    <citation type="submission" date="2006-08" db="EMBL/GenBank/DDBJ databases">
        <title>Complete sequence of Shewanella frigidimarina NCIMB 400.</title>
        <authorList>
            <consortium name="US DOE Joint Genome Institute"/>
            <person name="Copeland A."/>
            <person name="Lucas S."/>
            <person name="Lapidus A."/>
            <person name="Barry K."/>
            <person name="Detter J.C."/>
            <person name="Glavina del Rio T."/>
            <person name="Hammon N."/>
            <person name="Israni S."/>
            <person name="Dalin E."/>
            <person name="Tice H."/>
            <person name="Pitluck S."/>
            <person name="Fredrickson J.K."/>
            <person name="Kolker E."/>
            <person name="McCuel L.A."/>
            <person name="DiChristina T."/>
            <person name="Nealson K.H."/>
            <person name="Newman D."/>
            <person name="Tiedje J.M."/>
            <person name="Zhou J."/>
            <person name="Romine M.F."/>
            <person name="Culley D.E."/>
            <person name="Serres M."/>
            <person name="Chertkov O."/>
            <person name="Brettin T."/>
            <person name="Bruce D."/>
            <person name="Han C."/>
            <person name="Tapia R."/>
            <person name="Gilna P."/>
            <person name="Schmutz J."/>
            <person name="Larimer F."/>
            <person name="Land M."/>
            <person name="Hauser L."/>
            <person name="Kyrpides N."/>
            <person name="Mikhailova N."/>
            <person name="Richardson P."/>
        </authorList>
    </citation>
    <scope>NUCLEOTIDE SEQUENCE [LARGE SCALE GENOMIC DNA]</scope>
    <source>
        <strain>NCIMB 400</strain>
    </source>
</reference>
<accession>Q07XR8</accession>
<name>RL13_SHEFN</name>
<dbReference type="EMBL" id="CP000447">
    <property type="protein sequence ID" value="ABI73196.1"/>
    <property type="molecule type" value="Genomic_DNA"/>
</dbReference>
<dbReference type="RefSeq" id="WP_011638797.1">
    <property type="nucleotide sequence ID" value="NC_008345.1"/>
</dbReference>
<dbReference type="SMR" id="Q07XR8"/>
<dbReference type="STRING" id="318167.Sfri_3360"/>
<dbReference type="GeneID" id="90569015"/>
<dbReference type="KEGG" id="sfr:Sfri_3360"/>
<dbReference type="eggNOG" id="COG0102">
    <property type="taxonomic scope" value="Bacteria"/>
</dbReference>
<dbReference type="HOGENOM" id="CLU_082184_2_2_6"/>
<dbReference type="OrthoDB" id="9801330at2"/>
<dbReference type="Proteomes" id="UP000000684">
    <property type="component" value="Chromosome"/>
</dbReference>
<dbReference type="GO" id="GO:0022625">
    <property type="term" value="C:cytosolic large ribosomal subunit"/>
    <property type="evidence" value="ECO:0007669"/>
    <property type="project" value="TreeGrafter"/>
</dbReference>
<dbReference type="GO" id="GO:0003729">
    <property type="term" value="F:mRNA binding"/>
    <property type="evidence" value="ECO:0007669"/>
    <property type="project" value="TreeGrafter"/>
</dbReference>
<dbReference type="GO" id="GO:0003735">
    <property type="term" value="F:structural constituent of ribosome"/>
    <property type="evidence" value="ECO:0007669"/>
    <property type="project" value="InterPro"/>
</dbReference>
<dbReference type="GO" id="GO:0017148">
    <property type="term" value="P:negative regulation of translation"/>
    <property type="evidence" value="ECO:0007669"/>
    <property type="project" value="TreeGrafter"/>
</dbReference>
<dbReference type="GO" id="GO:0006412">
    <property type="term" value="P:translation"/>
    <property type="evidence" value="ECO:0007669"/>
    <property type="project" value="UniProtKB-UniRule"/>
</dbReference>
<dbReference type="CDD" id="cd00392">
    <property type="entry name" value="Ribosomal_L13"/>
    <property type="match status" value="1"/>
</dbReference>
<dbReference type="FunFam" id="3.90.1180.10:FF:000001">
    <property type="entry name" value="50S ribosomal protein L13"/>
    <property type="match status" value="1"/>
</dbReference>
<dbReference type="Gene3D" id="3.90.1180.10">
    <property type="entry name" value="Ribosomal protein L13"/>
    <property type="match status" value="1"/>
</dbReference>
<dbReference type="HAMAP" id="MF_01366">
    <property type="entry name" value="Ribosomal_uL13"/>
    <property type="match status" value="1"/>
</dbReference>
<dbReference type="InterPro" id="IPR005822">
    <property type="entry name" value="Ribosomal_uL13"/>
</dbReference>
<dbReference type="InterPro" id="IPR005823">
    <property type="entry name" value="Ribosomal_uL13_bac-type"/>
</dbReference>
<dbReference type="InterPro" id="IPR023563">
    <property type="entry name" value="Ribosomal_uL13_CS"/>
</dbReference>
<dbReference type="InterPro" id="IPR036899">
    <property type="entry name" value="Ribosomal_uL13_sf"/>
</dbReference>
<dbReference type="NCBIfam" id="TIGR01066">
    <property type="entry name" value="rplM_bact"/>
    <property type="match status" value="1"/>
</dbReference>
<dbReference type="PANTHER" id="PTHR11545:SF2">
    <property type="entry name" value="LARGE RIBOSOMAL SUBUNIT PROTEIN UL13M"/>
    <property type="match status" value="1"/>
</dbReference>
<dbReference type="PANTHER" id="PTHR11545">
    <property type="entry name" value="RIBOSOMAL PROTEIN L13"/>
    <property type="match status" value="1"/>
</dbReference>
<dbReference type="Pfam" id="PF00572">
    <property type="entry name" value="Ribosomal_L13"/>
    <property type="match status" value="1"/>
</dbReference>
<dbReference type="PIRSF" id="PIRSF002181">
    <property type="entry name" value="Ribosomal_L13"/>
    <property type="match status" value="1"/>
</dbReference>
<dbReference type="SUPFAM" id="SSF52161">
    <property type="entry name" value="Ribosomal protein L13"/>
    <property type="match status" value="1"/>
</dbReference>
<dbReference type="PROSITE" id="PS00783">
    <property type="entry name" value="RIBOSOMAL_L13"/>
    <property type="match status" value="1"/>
</dbReference>
<proteinExistence type="inferred from homology"/>
<evidence type="ECO:0000255" key="1">
    <source>
        <dbReference type="HAMAP-Rule" id="MF_01366"/>
    </source>
</evidence>
<evidence type="ECO:0000305" key="2"/>
<gene>
    <name evidence="1" type="primary">rplM</name>
    <name type="ordered locus">Sfri_3360</name>
</gene>
<protein>
    <recommendedName>
        <fullName evidence="1">Large ribosomal subunit protein uL13</fullName>
    </recommendedName>
    <alternativeName>
        <fullName evidence="2">50S ribosomal protein L13</fullName>
    </alternativeName>
</protein>